<keyword id="KW-1015">Disulfide bond</keyword>
<keyword id="KW-0325">Glycoprotein</keyword>
<keyword id="KW-0326">Glycosidase</keyword>
<keyword id="KW-0378">Hydrolase</keyword>
<keyword id="KW-1185">Reference proteome</keyword>
<keyword id="KW-0732">Signal</keyword>
<feature type="signal peptide" evidence="5">
    <location>
        <begin position="1"/>
        <end position="21"/>
    </location>
</feature>
<feature type="chain" id="PRO_0000389577" description="Beta-glucosidase 14">
    <location>
        <begin position="22"/>
        <end position="489"/>
    </location>
</feature>
<feature type="active site" description="Proton donor" evidence="3">
    <location>
        <position position="199"/>
    </location>
</feature>
<feature type="active site" description="Nucleophile" evidence="3">
    <location>
        <position position="396"/>
    </location>
</feature>
<feature type="binding site" evidence="3">
    <location>
        <position position="49"/>
    </location>
    <ligand>
        <name>a beta-D-glucoside</name>
        <dbReference type="ChEBI" id="CHEBI:22798"/>
    </ligand>
</feature>
<feature type="binding site" evidence="3">
    <location>
        <position position="153"/>
    </location>
    <ligand>
        <name>a beta-D-glucoside</name>
        <dbReference type="ChEBI" id="CHEBI:22798"/>
    </ligand>
</feature>
<feature type="binding site" evidence="3">
    <location>
        <begin position="198"/>
        <end position="199"/>
    </location>
    <ligand>
        <name>a beta-D-glucoside</name>
        <dbReference type="ChEBI" id="CHEBI:22798"/>
    </ligand>
</feature>
<feature type="binding site" evidence="3">
    <location>
        <position position="343"/>
    </location>
    <ligand>
        <name>a beta-D-glucoside</name>
        <dbReference type="ChEBI" id="CHEBI:22798"/>
    </ligand>
</feature>
<feature type="binding site" evidence="4">
    <location>
        <position position="396"/>
    </location>
    <ligand>
        <name>a beta-D-glucoside</name>
        <dbReference type="ChEBI" id="CHEBI:22798"/>
    </ligand>
</feature>
<feature type="binding site" evidence="3">
    <location>
        <position position="441"/>
    </location>
    <ligand>
        <name>a beta-D-glucoside</name>
        <dbReference type="ChEBI" id="CHEBI:22798"/>
    </ligand>
</feature>
<feature type="binding site" evidence="3">
    <location>
        <begin position="448"/>
        <end position="449"/>
    </location>
    <ligand>
        <name>a beta-D-glucoside</name>
        <dbReference type="ChEBI" id="CHEBI:22798"/>
    </ligand>
</feature>
<feature type="binding site" evidence="2">
    <location>
        <position position="457"/>
    </location>
    <ligand>
        <name>a beta-D-glucoside</name>
        <dbReference type="ChEBI" id="CHEBI:22798"/>
    </ligand>
</feature>
<feature type="glycosylation site" description="N-linked (GlcNAc...) asparagine" evidence="6">
    <location>
        <position position="80"/>
    </location>
</feature>
<feature type="glycosylation site" description="N-linked (GlcNAc...) asparagine" evidence="6">
    <location>
        <position position="225"/>
    </location>
</feature>
<feature type="glycosylation site" description="N-linked (GlcNAc...) asparagine" evidence="6">
    <location>
        <position position="357"/>
    </location>
</feature>
<feature type="disulfide bond" evidence="3">
    <location>
        <begin position="218"/>
        <end position="226"/>
    </location>
</feature>
<accession>Q9SLA0</accession>
<dbReference type="EC" id="3.2.1.21" evidence="1"/>
<dbReference type="EMBL" id="AC006053">
    <property type="protein sequence ID" value="AAD31364.1"/>
    <property type="status" value="ALT_SEQ"/>
    <property type="molecule type" value="Genomic_DNA"/>
</dbReference>
<dbReference type="EMBL" id="CP002685">
    <property type="protein sequence ID" value="AEC07728.1"/>
    <property type="molecule type" value="Genomic_DNA"/>
</dbReference>
<dbReference type="PIR" id="G84650">
    <property type="entry name" value="G84650"/>
</dbReference>
<dbReference type="RefSeq" id="NP_850065.1">
    <property type="nucleotide sequence ID" value="NM_179734.1"/>
</dbReference>
<dbReference type="SMR" id="Q9SLA0"/>
<dbReference type="FunCoup" id="Q9SLA0">
    <property type="interactions" value="356"/>
</dbReference>
<dbReference type="STRING" id="3702.Q9SLA0"/>
<dbReference type="CAZy" id="GH1">
    <property type="family name" value="Glycoside Hydrolase Family 1"/>
</dbReference>
<dbReference type="GlyCosmos" id="Q9SLA0">
    <property type="glycosylation" value="3 sites, No reported glycans"/>
</dbReference>
<dbReference type="GlyGen" id="Q9SLA0">
    <property type="glycosylation" value="3 sites"/>
</dbReference>
<dbReference type="PaxDb" id="3702-AT2G25630.1"/>
<dbReference type="ProteomicsDB" id="240470"/>
<dbReference type="EnsemblPlants" id="AT2G25630.1">
    <property type="protein sequence ID" value="AT2G25630.1"/>
    <property type="gene ID" value="AT2G25630"/>
</dbReference>
<dbReference type="GeneID" id="817104"/>
<dbReference type="Gramene" id="AT2G25630.1">
    <property type="protein sequence ID" value="AT2G25630.1"/>
    <property type="gene ID" value="AT2G25630"/>
</dbReference>
<dbReference type="KEGG" id="ath:AT2G25630"/>
<dbReference type="Araport" id="AT2G25630"/>
<dbReference type="TAIR" id="AT2G25630">
    <property type="gene designation" value="BGLU14"/>
</dbReference>
<dbReference type="eggNOG" id="KOG0626">
    <property type="taxonomic scope" value="Eukaryota"/>
</dbReference>
<dbReference type="HOGENOM" id="CLU_001859_1_0_1"/>
<dbReference type="InParanoid" id="Q9SLA0"/>
<dbReference type="OMA" id="AHWFRHL"/>
<dbReference type="PhylomeDB" id="Q9SLA0"/>
<dbReference type="BioCyc" id="ARA:AT2G25630-MONOMER"/>
<dbReference type="BRENDA" id="3.2.1.21">
    <property type="organism ID" value="399"/>
</dbReference>
<dbReference type="PRO" id="PR:Q9SLA0"/>
<dbReference type="Proteomes" id="UP000006548">
    <property type="component" value="Chromosome 2"/>
</dbReference>
<dbReference type="ExpressionAtlas" id="Q9SLA0">
    <property type="expression patterns" value="baseline and differential"/>
</dbReference>
<dbReference type="GO" id="GO:0008422">
    <property type="term" value="F:beta-glucosidase activity"/>
    <property type="evidence" value="ECO:0007669"/>
    <property type="project" value="UniProtKB-EC"/>
</dbReference>
<dbReference type="GO" id="GO:0005975">
    <property type="term" value="P:carbohydrate metabolic process"/>
    <property type="evidence" value="ECO:0007669"/>
    <property type="project" value="InterPro"/>
</dbReference>
<dbReference type="GO" id="GO:0009860">
    <property type="term" value="P:pollen tube growth"/>
    <property type="evidence" value="ECO:0000270"/>
    <property type="project" value="TAIR"/>
</dbReference>
<dbReference type="FunFam" id="3.20.20.80:FF:000022">
    <property type="entry name" value="Beta-glucosidase 11"/>
    <property type="match status" value="1"/>
</dbReference>
<dbReference type="Gene3D" id="3.20.20.80">
    <property type="entry name" value="Glycosidases"/>
    <property type="match status" value="1"/>
</dbReference>
<dbReference type="InterPro" id="IPR001360">
    <property type="entry name" value="Glyco_hydro_1"/>
</dbReference>
<dbReference type="InterPro" id="IPR033132">
    <property type="entry name" value="Glyco_hydro_1_N_CS"/>
</dbReference>
<dbReference type="InterPro" id="IPR017853">
    <property type="entry name" value="Glycoside_hydrolase_SF"/>
</dbReference>
<dbReference type="PANTHER" id="PTHR10353:SF237">
    <property type="entry name" value="BETA-GLUCOSIDASE 12-RELATED"/>
    <property type="match status" value="1"/>
</dbReference>
<dbReference type="PANTHER" id="PTHR10353">
    <property type="entry name" value="GLYCOSYL HYDROLASE"/>
    <property type="match status" value="1"/>
</dbReference>
<dbReference type="Pfam" id="PF00232">
    <property type="entry name" value="Glyco_hydro_1"/>
    <property type="match status" value="1"/>
</dbReference>
<dbReference type="PRINTS" id="PR00131">
    <property type="entry name" value="GLHYDRLASE1"/>
</dbReference>
<dbReference type="SUPFAM" id="SSF51445">
    <property type="entry name" value="(Trans)glycosidases"/>
    <property type="match status" value="1"/>
</dbReference>
<dbReference type="PROSITE" id="PS00653">
    <property type="entry name" value="GLYCOSYL_HYDROL_F1_2"/>
    <property type="match status" value="1"/>
</dbReference>
<organism>
    <name type="scientific">Arabidopsis thaliana</name>
    <name type="common">Mouse-ear cress</name>
    <dbReference type="NCBI Taxonomy" id="3702"/>
    <lineage>
        <taxon>Eukaryota</taxon>
        <taxon>Viridiplantae</taxon>
        <taxon>Streptophyta</taxon>
        <taxon>Embryophyta</taxon>
        <taxon>Tracheophyta</taxon>
        <taxon>Spermatophyta</taxon>
        <taxon>Magnoliopsida</taxon>
        <taxon>eudicotyledons</taxon>
        <taxon>Gunneridae</taxon>
        <taxon>Pentapetalae</taxon>
        <taxon>rosids</taxon>
        <taxon>malvids</taxon>
        <taxon>Brassicales</taxon>
        <taxon>Brassicaceae</taxon>
        <taxon>Camelineae</taxon>
        <taxon>Arabidopsis</taxon>
    </lineage>
</organism>
<sequence>MTSKYFSVLVFIILASNEVVAKRHSSTPKLRKTDFPEDFIFGAATSAYQVEGAAQEDGRGPSIWDTFSEKYPEKIKDGSNGSIADDSYHLYKEDVGLLHQIGFNAYRFSISWSRILPRGNLKGGINQAGIDYYNNLINELLSKGIKPFATIFHWDTPQDLEDAYGGFRGAEIVNDFRDYADICFKSFGDRVKHWITLNEPLTVVQQGYVAGVMAPGRCSKFTNPNCTAGNGATEPYIVGHNLILAHGEAIKVYRKKYKASQKGQVGIALNAGWNLPYTESAEDRLAAARAMAFTFDYFMEPLVTGKYPVDMVNNVKGGRLPTFTSKQSNMLKGSYDFIGINYYSSSYAKDVPCSSENVTMFSDPCASVTGERDGGIRDLILYAKYKFKDPVMYITENGRDEASTGKILLKDGDRIDYYARHLKMVQDAILIGANVKGFFAWSLLDNFEWASGYTVRFGLVYVDFNDRRKRYLKKSAHWFRHLLNGKKEN</sequence>
<gene>
    <name evidence="7" type="primary">BGLU14</name>
    <name evidence="9" type="ordered locus">At2g25630</name>
    <name evidence="10" type="ORF">F3N11.8</name>
</gene>
<comment type="catalytic activity">
    <reaction evidence="1">
        <text>Hydrolysis of terminal, non-reducing beta-D-glucosyl residues with release of beta-D-glucose.</text>
        <dbReference type="EC" id="3.2.1.21"/>
    </reaction>
</comment>
<comment type="similarity">
    <text evidence="8">Belongs to the glycosyl hydrolase 1 family.</text>
</comment>
<comment type="sequence caution" evidence="8">
    <conflict type="erroneous gene model prediction">
        <sequence resource="EMBL-CDS" id="AAD31364"/>
    </conflict>
</comment>
<protein>
    <recommendedName>
        <fullName evidence="7">Beta-glucosidase 14</fullName>
        <shortName evidence="7">AtBGLU14</shortName>
        <ecNumber evidence="1">3.2.1.21</ecNumber>
    </recommendedName>
</protein>
<reference key="1">
    <citation type="journal article" date="1999" name="Nature">
        <title>Sequence and analysis of chromosome 2 of the plant Arabidopsis thaliana.</title>
        <authorList>
            <person name="Lin X."/>
            <person name="Kaul S."/>
            <person name="Rounsley S.D."/>
            <person name="Shea T.P."/>
            <person name="Benito M.-I."/>
            <person name="Town C.D."/>
            <person name="Fujii C.Y."/>
            <person name="Mason T.M."/>
            <person name="Bowman C.L."/>
            <person name="Barnstead M.E."/>
            <person name="Feldblyum T.V."/>
            <person name="Buell C.R."/>
            <person name="Ketchum K.A."/>
            <person name="Lee J.J."/>
            <person name="Ronning C.M."/>
            <person name="Koo H.L."/>
            <person name="Moffat K.S."/>
            <person name="Cronin L.A."/>
            <person name="Shen M."/>
            <person name="Pai G."/>
            <person name="Van Aken S."/>
            <person name="Umayam L."/>
            <person name="Tallon L.J."/>
            <person name="Gill J.E."/>
            <person name="Adams M.D."/>
            <person name="Carrera A.J."/>
            <person name="Creasy T.H."/>
            <person name="Goodman H.M."/>
            <person name="Somerville C.R."/>
            <person name="Copenhaver G.P."/>
            <person name="Preuss D."/>
            <person name="Nierman W.C."/>
            <person name="White O."/>
            <person name="Eisen J.A."/>
            <person name="Salzberg S.L."/>
            <person name="Fraser C.M."/>
            <person name="Venter J.C."/>
        </authorList>
    </citation>
    <scope>NUCLEOTIDE SEQUENCE [LARGE SCALE GENOMIC DNA]</scope>
    <source>
        <strain>cv. Columbia</strain>
    </source>
</reference>
<reference key="2">
    <citation type="journal article" date="2017" name="Plant J.">
        <title>Araport11: a complete reannotation of the Arabidopsis thaliana reference genome.</title>
        <authorList>
            <person name="Cheng C.Y."/>
            <person name="Krishnakumar V."/>
            <person name="Chan A.P."/>
            <person name="Thibaud-Nissen F."/>
            <person name="Schobel S."/>
            <person name="Town C.D."/>
        </authorList>
    </citation>
    <scope>GENOME REANNOTATION</scope>
    <source>
        <strain>cv. Columbia</strain>
    </source>
</reference>
<reference key="3">
    <citation type="journal article" date="2004" name="Plant Mol. Biol.">
        <title>Functional genomic analysis of Arabidopsis thaliana glycoside hydrolase family 1.</title>
        <authorList>
            <person name="Xu Z."/>
            <person name="Escamilla-Trevino L.L."/>
            <person name="Zeng L."/>
            <person name="Lalgondar M."/>
            <person name="Bevan D.R."/>
            <person name="Winkel B.S.J."/>
            <person name="Mohamed A."/>
            <person name="Cheng C.-L."/>
            <person name="Shih M.-C."/>
            <person name="Poulton J.E."/>
            <person name="Esen A."/>
        </authorList>
    </citation>
    <scope>GENE FAMILY</scope>
    <scope>NOMENCLATURE</scope>
</reference>
<name>BGL14_ARATH</name>
<proteinExistence type="inferred from homology"/>
<evidence type="ECO:0000250" key="1">
    <source>
        <dbReference type="UniProtKB" id="O64879"/>
    </source>
</evidence>
<evidence type="ECO:0000250" key="2">
    <source>
        <dbReference type="UniProtKB" id="Q1XH05"/>
    </source>
</evidence>
<evidence type="ECO:0000250" key="3">
    <source>
        <dbReference type="UniProtKB" id="Q7XSK0"/>
    </source>
</evidence>
<evidence type="ECO:0000250" key="4">
    <source>
        <dbReference type="UniProtKB" id="Q9SPP9"/>
    </source>
</evidence>
<evidence type="ECO:0000255" key="5"/>
<evidence type="ECO:0000255" key="6">
    <source>
        <dbReference type="PROSITE-ProRule" id="PRU00498"/>
    </source>
</evidence>
<evidence type="ECO:0000303" key="7">
    <source>
    </source>
</evidence>
<evidence type="ECO:0000305" key="8"/>
<evidence type="ECO:0000312" key="9">
    <source>
        <dbReference type="Araport" id="AT2G25630"/>
    </source>
</evidence>
<evidence type="ECO:0000312" key="10">
    <source>
        <dbReference type="EMBL" id="AAD31364.1"/>
    </source>
</evidence>